<gene>
    <name evidence="1" type="primary">dxs</name>
    <name type="ordered locus">XOO2017</name>
</gene>
<comment type="function">
    <text evidence="1">Catalyzes the acyloin condensation reaction between C atoms 2 and 3 of pyruvate and glyceraldehyde 3-phosphate to yield 1-deoxy-D-xylulose-5-phosphate (DXP).</text>
</comment>
<comment type="catalytic activity">
    <reaction evidence="1">
        <text>D-glyceraldehyde 3-phosphate + pyruvate + H(+) = 1-deoxy-D-xylulose 5-phosphate + CO2</text>
        <dbReference type="Rhea" id="RHEA:12605"/>
        <dbReference type="ChEBI" id="CHEBI:15361"/>
        <dbReference type="ChEBI" id="CHEBI:15378"/>
        <dbReference type="ChEBI" id="CHEBI:16526"/>
        <dbReference type="ChEBI" id="CHEBI:57792"/>
        <dbReference type="ChEBI" id="CHEBI:59776"/>
        <dbReference type="EC" id="2.2.1.7"/>
    </reaction>
</comment>
<comment type="cofactor">
    <cofactor evidence="1">
        <name>Mg(2+)</name>
        <dbReference type="ChEBI" id="CHEBI:18420"/>
    </cofactor>
    <text evidence="1">Binds 1 Mg(2+) ion per subunit.</text>
</comment>
<comment type="cofactor">
    <cofactor evidence="1">
        <name>thiamine diphosphate</name>
        <dbReference type="ChEBI" id="CHEBI:58937"/>
    </cofactor>
    <text evidence="1">Binds 1 thiamine pyrophosphate per subunit.</text>
</comment>
<comment type="pathway">
    <text evidence="1">Metabolic intermediate biosynthesis; 1-deoxy-D-xylulose 5-phosphate biosynthesis; 1-deoxy-D-xylulose 5-phosphate from D-glyceraldehyde 3-phosphate and pyruvate: step 1/1.</text>
</comment>
<comment type="subunit">
    <text evidence="1">Homodimer.</text>
</comment>
<comment type="similarity">
    <text evidence="1">Belongs to the transketolase family. DXPS subfamily.</text>
</comment>
<comment type="sequence caution" evidence="2">
    <conflict type="erroneous initiation">
        <sequence resource="EMBL-CDS" id="AAW75271"/>
    </conflict>
</comment>
<organism>
    <name type="scientific">Xanthomonas oryzae pv. oryzae (strain KACC10331 / KXO85)</name>
    <dbReference type="NCBI Taxonomy" id="291331"/>
    <lineage>
        <taxon>Bacteria</taxon>
        <taxon>Pseudomonadati</taxon>
        <taxon>Pseudomonadota</taxon>
        <taxon>Gammaproteobacteria</taxon>
        <taxon>Lysobacterales</taxon>
        <taxon>Lysobacteraceae</taxon>
        <taxon>Xanthomonas</taxon>
    </lineage>
</organism>
<reference key="1">
    <citation type="journal article" date="2005" name="Nucleic Acids Res.">
        <title>The genome sequence of Xanthomonas oryzae pathovar oryzae KACC10331, the bacterial blight pathogen of rice.</title>
        <authorList>
            <person name="Lee B.-M."/>
            <person name="Park Y.-J."/>
            <person name="Park D.-S."/>
            <person name="Kang H.-W."/>
            <person name="Kim J.-G."/>
            <person name="Song E.-S."/>
            <person name="Park I.-C."/>
            <person name="Yoon U.-H."/>
            <person name="Hahn J.-H."/>
            <person name="Koo B.-S."/>
            <person name="Lee G.-B."/>
            <person name="Kim H."/>
            <person name="Park H.-S."/>
            <person name="Yoon K.-O."/>
            <person name="Kim J.-H."/>
            <person name="Jung C.-H."/>
            <person name="Koh N.-H."/>
            <person name="Seo J.-S."/>
            <person name="Go S.-J."/>
        </authorList>
    </citation>
    <scope>NUCLEOTIDE SEQUENCE [LARGE SCALE GENOMIC DNA]</scope>
    <source>
        <strain>KACC10331 / KXO85</strain>
    </source>
</reference>
<dbReference type="EC" id="2.2.1.7" evidence="1"/>
<dbReference type="EMBL" id="AE013598">
    <property type="protein sequence ID" value="AAW75271.1"/>
    <property type="status" value="ALT_INIT"/>
    <property type="molecule type" value="Genomic_DNA"/>
</dbReference>
<dbReference type="SMR" id="Q5H1A0"/>
<dbReference type="STRING" id="291331.XOO2017"/>
<dbReference type="KEGG" id="xoo:XOO2017"/>
<dbReference type="HOGENOM" id="CLU_009227_1_4_6"/>
<dbReference type="UniPathway" id="UPA00064">
    <property type="reaction ID" value="UER00091"/>
</dbReference>
<dbReference type="Proteomes" id="UP000006735">
    <property type="component" value="Chromosome"/>
</dbReference>
<dbReference type="GO" id="GO:0005829">
    <property type="term" value="C:cytosol"/>
    <property type="evidence" value="ECO:0007669"/>
    <property type="project" value="TreeGrafter"/>
</dbReference>
<dbReference type="GO" id="GO:0008661">
    <property type="term" value="F:1-deoxy-D-xylulose-5-phosphate synthase activity"/>
    <property type="evidence" value="ECO:0007669"/>
    <property type="project" value="UniProtKB-UniRule"/>
</dbReference>
<dbReference type="GO" id="GO:0000287">
    <property type="term" value="F:magnesium ion binding"/>
    <property type="evidence" value="ECO:0007669"/>
    <property type="project" value="UniProtKB-UniRule"/>
</dbReference>
<dbReference type="GO" id="GO:0030976">
    <property type="term" value="F:thiamine pyrophosphate binding"/>
    <property type="evidence" value="ECO:0007669"/>
    <property type="project" value="UniProtKB-UniRule"/>
</dbReference>
<dbReference type="GO" id="GO:0052865">
    <property type="term" value="P:1-deoxy-D-xylulose 5-phosphate biosynthetic process"/>
    <property type="evidence" value="ECO:0007669"/>
    <property type="project" value="UniProtKB-UniPathway"/>
</dbReference>
<dbReference type="GO" id="GO:0019288">
    <property type="term" value="P:isopentenyl diphosphate biosynthetic process, methylerythritol 4-phosphate pathway"/>
    <property type="evidence" value="ECO:0007669"/>
    <property type="project" value="TreeGrafter"/>
</dbReference>
<dbReference type="GO" id="GO:0016114">
    <property type="term" value="P:terpenoid biosynthetic process"/>
    <property type="evidence" value="ECO:0007669"/>
    <property type="project" value="UniProtKB-UniRule"/>
</dbReference>
<dbReference type="GO" id="GO:0009228">
    <property type="term" value="P:thiamine biosynthetic process"/>
    <property type="evidence" value="ECO:0007669"/>
    <property type="project" value="UniProtKB-UniRule"/>
</dbReference>
<dbReference type="CDD" id="cd02007">
    <property type="entry name" value="TPP_DXS"/>
    <property type="match status" value="1"/>
</dbReference>
<dbReference type="CDD" id="cd07033">
    <property type="entry name" value="TPP_PYR_DXS_TK_like"/>
    <property type="match status" value="1"/>
</dbReference>
<dbReference type="FunFam" id="3.40.50.920:FF:000002">
    <property type="entry name" value="1-deoxy-D-xylulose-5-phosphate synthase"/>
    <property type="match status" value="1"/>
</dbReference>
<dbReference type="FunFam" id="3.40.50.970:FF:000005">
    <property type="entry name" value="1-deoxy-D-xylulose-5-phosphate synthase"/>
    <property type="match status" value="1"/>
</dbReference>
<dbReference type="Gene3D" id="3.40.50.920">
    <property type="match status" value="1"/>
</dbReference>
<dbReference type="Gene3D" id="3.40.50.970">
    <property type="match status" value="2"/>
</dbReference>
<dbReference type="HAMAP" id="MF_00315">
    <property type="entry name" value="DXP_synth"/>
    <property type="match status" value="1"/>
</dbReference>
<dbReference type="InterPro" id="IPR005477">
    <property type="entry name" value="Dxylulose-5-P_synthase"/>
</dbReference>
<dbReference type="InterPro" id="IPR029061">
    <property type="entry name" value="THDP-binding"/>
</dbReference>
<dbReference type="InterPro" id="IPR009014">
    <property type="entry name" value="Transketo_C/PFOR_II"/>
</dbReference>
<dbReference type="InterPro" id="IPR005475">
    <property type="entry name" value="Transketolase-like_Pyr-bd"/>
</dbReference>
<dbReference type="InterPro" id="IPR020826">
    <property type="entry name" value="Transketolase_BS"/>
</dbReference>
<dbReference type="InterPro" id="IPR033248">
    <property type="entry name" value="Transketolase_C"/>
</dbReference>
<dbReference type="InterPro" id="IPR049557">
    <property type="entry name" value="Transketolase_CS"/>
</dbReference>
<dbReference type="NCBIfam" id="TIGR00204">
    <property type="entry name" value="dxs"/>
    <property type="match status" value="1"/>
</dbReference>
<dbReference type="NCBIfam" id="NF003933">
    <property type="entry name" value="PRK05444.2-2"/>
    <property type="match status" value="1"/>
</dbReference>
<dbReference type="PANTHER" id="PTHR43322">
    <property type="entry name" value="1-D-DEOXYXYLULOSE 5-PHOSPHATE SYNTHASE-RELATED"/>
    <property type="match status" value="1"/>
</dbReference>
<dbReference type="PANTHER" id="PTHR43322:SF5">
    <property type="entry name" value="1-DEOXY-D-XYLULOSE-5-PHOSPHATE SYNTHASE, CHLOROPLASTIC"/>
    <property type="match status" value="1"/>
</dbReference>
<dbReference type="Pfam" id="PF13292">
    <property type="entry name" value="DXP_synthase_N"/>
    <property type="match status" value="1"/>
</dbReference>
<dbReference type="Pfam" id="PF02779">
    <property type="entry name" value="Transket_pyr"/>
    <property type="match status" value="1"/>
</dbReference>
<dbReference type="Pfam" id="PF02780">
    <property type="entry name" value="Transketolase_C"/>
    <property type="match status" value="1"/>
</dbReference>
<dbReference type="SMART" id="SM00861">
    <property type="entry name" value="Transket_pyr"/>
    <property type="match status" value="1"/>
</dbReference>
<dbReference type="SUPFAM" id="SSF52518">
    <property type="entry name" value="Thiamin diphosphate-binding fold (THDP-binding)"/>
    <property type="match status" value="2"/>
</dbReference>
<dbReference type="SUPFAM" id="SSF52922">
    <property type="entry name" value="TK C-terminal domain-like"/>
    <property type="match status" value="1"/>
</dbReference>
<dbReference type="PROSITE" id="PS00801">
    <property type="entry name" value="TRANSKETOLASE_1"/>
    <property type="match status" value="1"/>
</dbReference>
<dbReference type="PROSITE" id="PS00802">
    <property type="entry name" value="TRANSKETOLASE_2"/>
    <property type="match status" value="1"/>
</dbReference>
<accession>Q5H1A0</accession>
<name>DXS_XANOR</name>
<proteinExistence type="inferred from homology"/>
<sequence>MIDTTRYPRLSRIHTPDDLRRFDEAELTVIAEELRSYLIESVGKSGGHFAAGLGVIELTVALHYLYQTPVDQLVWDVGHQTYPHKILTGRRDQIHTVKQKDGVAPFPKREESVYDTFGVGHSSTSISAALGMAIAAQRNGDDRKVVAVIGDGAMTAGMVYEALNHAGGMDPEPNLLVILNDNRMSISEAVGGLTKMLGRASGSRTLNAIREGGKKILGDKKNNPTARFVRRWEEHWKGMFVPSTLFEEMGFHYTGPIDGHDLPRLVGALKTLQTLKGPQLLHVITTKGKGYELAEGDQIGYHAVSPFDPSKGLVAKGGAKKPTYTDVFSDWVCDMAAAEPKLLVITPAMREGSGLVRFSKEYPQRYFDVAIAEQHAVTLAAGMATQGAKPVVAIYSTFLQRGYDQLVHDVAVQQLDVLFAIDRGGVVGPDGATHAGNLDLSFLRCVPHMVVMAPADEAECRQMLSTGMQYQGPAAVRYPRGTGPGAALDSSLATLPIGKAQLRHSGTRIALLGFGATVDAAEAVGRDLGLTVVNMRFVKPLDKAMLLELAKTHEGFVTIEDNVVAGGAGSGVSELLNAEAITLPMLHLGLPDSFQHHASREDLLAEAGIDQAGIRTAVLKRWPQLMTGKTPSLNAAAG</sequence>
<keyword id="KW-0414">Isoprene biosynthesis</keyword>
<keyword id="KW-0460">Magnesium</keyword>
<keyword id="KW-0479">Metal-binding</keyword>
<keyword id="KW-1185">Reference proteome</keyword>
<keyword id="KW-0784">Thiamine biosynthesis</keyword>
<keyword id="KW-0786">Thiamine pyrophosphate</keyword>
<keyword id="KW-0808">Transferase</keyword>
<evidence type="ECO:0000255" key="1">
    <source>
        <dbReference type="HAMAP-Rule" id="MF_00315"/>
    </source>
</evidence>
<evidence type="ECO:0000305" key="2"/>
<feature type="chain" id="PRO_0000256506" description="1-deoxy-D-xylulose-5-phosphate synthase">
    <location>
        <begin position="1"/>
        <end position="638"/>
    </location>
</feature>
<feature type="binding site" evidence="1">
    <location>
        <position position="79"/>
    </location>
    <ligand>
        <name>thiamine diphosphate</name>
        <dbReference type="ChEBI" id="CHEBI:58937"/>
    </ligand>
</feature>
<feature type="binding site" evidence="1">
    <location>
        <begin position="120"/>
        <end position="122"/>
    </location>
    <ligand>
        <name>thiamine diphosphate</name>
        <dbReference type="ChEBI" id="CHEBI:58937"/>
    </ligand>
</feature>
<feature type="binding site" evidence="1">
    <location>
        <position position="151"/>
    </location>
    <ligand>
        <name>Mg(2+)</name>
        <dbReference type="ChEBI" id="CHEBI:18420"/>
    </ligand>
</feature>
<feature type="binding site" evidence="1">
    <location>
        <begin position="152"/>
        <end position="153"/>
    </location>
    <ligand>
        <name>thiamine diphosphate</name>
        <dbReference type="ChEBI" id="CHEBI:58937"/>
    </ligand>
</feature>
<feature type="binding site" evidence="1">
    <location>
        <position position="182"/>
    </location>
    <ligand>
        <name>Mg(2+)</name>
        <dbReference type="ChEBI" id="CHEBI:18420"/>
    </ligand>
</feature>
<feature type="binding site" evidence="1">
    <location>
        <position position="182"/>
    </location>
    <ligand>
        <name>thiamine diphosphate</name>
        <dbReference type="ChEBI" id="CHEBI:58937"/>
    </ligand>
</feature>
<feature type="binding site" evidence="1">
    <location>
        <position position="291"/>
    </location>
    <ligand>
        <name>thiamine diphosphate</name>
        <dbReference type="ChEBI" id="CHEBI:58937"/>
    </ligand>
</feature>
<feature type="binding site" evidence="1">
    <location>
        <position position="373"/>
    </location>
    <ligand>
        <name>thiamine diphosphate</name>
        <dbReference type="ChEBI" id="CHEBI:58937"/>
    </ligand>
</feature>
<protein>
    <recommendedName>
        <fullName evidence="1">1-deoxy-D-xylulose-5-phosphate synthase</fullName>
        <ecNumber evidence="1">2.2.1.7</ecNumber>
    </recommendedName>
    <alternativeName>
        <fullName evidence="1">1-deoxyxylulose-5-phosphate synthase</fullName>
        <shortName evidence="1">DXP synthase</shortName>
        <shortName evidence="1">DXPS</shortName>
    </alternativeName>
</protein>